<comment type="subunit">
    <text evidence="1">Homodimer and heterodimers.</text>
</comment>
<comment type="subcellular location">
    <subcellularLocation>
        <location evidence="1">Cell membrane</location>
        <topology evidence="1">Multi-pass membrane protein</topology>
    </subcellularLocation>
</comment>
<comment type="similarity">
    <text evidence="3">Belongs to the Casparian strip membrane proteins (CASP) family.</text>
</comment>
<reference key="1">
    <citation type="journal article" date="2008" name="Science">
        <title>The Physcomitrella genome reveals evolutionary insights into the conquest of land by plants.</title>
        <authorList>
            <person name="Rensing S.A."/>
            <person name="Lang D."/>
            <person name="Zimmer A.D."/>
            <person name="Terry A."/>
            <person name="Salamov A."/>
            <person name="Shapiro H."/>
            <person name="Nishiyama T."/>
            <person name="Perroud P.-F."/>
            <person name="Lindquist E.A."/>
            <person name="Kamisugi Y."/>
            <person name="Tanahashi T."/>
            <person name="Sakakibara K."/>
            <person name="Fujita T."/>
            <person name="Oishi K."/>
            <person name="Shin-I T."/>
            <person name="Kuroki Y."/>
            <person name="Toyoda A."/>
            <person name="Suzuki Y."/>
            <person name="Hashimoto S.-I."/>
            <person name="Yamaguchi K."/>
            <person name="Sugano S."/>
            <person name="Kohara Y."/>
            <person name="Fujiyama A."/>
            <person name="Anterola A."/>
            <person name="Aoki S."/>
            <person name="Ashton N."/>
            <person name="Barbazuk W.B."/>
            <person name="Barker E."/>
            <person name="Bennetzen J.L."/>
            <person name="Blankenship R."/>
            <person name="Cho S.H."/>
            <person name="Dutcher S.K."/>
            <person name="Estelle M."/>
            <person name="Fawcett J.A."/>
            <person name="Gundlach H."/>
            <person name="Hanada K."/>
            <person name="Heyl A."/>
            <person name="Hicks K.A."/>
            <person name="Hughes J."/>
            <person name="Lohr M."/>
            <person name="Mayer K."/>
            <person name="Melkozernov A."/>
            <person name="Murata T."/>
            <person name="Nelson D.R."/>
            <person name="Pils B."/>
            <person name="Prigge M."/>
            <person name="Reiss B."/>
            <person name="Renner T."/>
            <person name="Rombauts S."/>
            <person name="Rushton P.J."/>
            <person name="Sanderfoot A."/>
            <person name="Schween G."/>
            <person name="Shiu S.-H."/>
            <person name="Stueber K."/>
            <person name="Theodoulou F.L."/>
            <person name="Tu H."/>
            <person name="Van de Peer Y."/>
            <person name="Verrier P.J."/>
            <person name="Waters E."/>
            <person name="Wood A."/>
            <person name="Yang L."/>
            <person name="Cove D."/>
            <person name="Cuming A.C."/>
            <person name="Hasebe M."/>
            <person name="Lucas S."/>
            <person name="Mishler B.D."/>
            <person name="Reski R."/>
            <person name="Grigoriev I.V."/>
            <person name="Quatrano R.S."/>
            <person name="Boore J.L."/>
        </authorList>
    </citation>
    <scope>NUCLEOTIDE SEQUENCE [LARGE SCALE GENOMIC DNA]</scope>
    <source>
        <strain>cv. Gransden 2004</strain>
    </source>
</reference>
<reference key="2">
    <citation type="journal article" date="2014" name="Plant Physiol.">
        <title>Functional and evolutionary analysis of the CASPARIAN STRIP MEMBRANE DOMAIN PROTEIN family.</title>
        <authorList>
            <person name="Roppolo D."/>
            <person name="Boeckmann B."/>
            <person name="Pfister A."/>
            <person name="Boutet E."/>
            <person name="Rubio M.C."/>
            <person name="Denervaud-Tendon V."/>
            <person name="Vermeer J.E."/>
            <person name="Gheyselinck J."/>
            <person name="Xenarios I."/>
            <person name="Geldner N."/>
        </authorList>
    </citation>
    <scope>GENE FAMILY</scope>
    <scope>NOMENCLATURE</scope>
</reference>
<accession>A9STU1</accession>
<feature type="chain" id="PRO_0000391539" description="CASP-like protein 4C1">
    <location>
        <begin position="1"/>
        <end position="199"/>
    </location>
</feature>
<feature type="topological domain" description="Cytoplasmic" evidence="2">
    <location>
        <begin position="1"/>
        <end position="35"/>
    </location>
</feature>
<feature type="transmembrane region" description="Helical" evidence="2">
    <location>
        <begin position="36"/>
        <end position="56"/>
    </location>
</feature>
<feature type="topological domain" description="Extracellular" evidence="2">
    <location>
        <begin position="57"/>
        <end position="80"/>
    </location>
</feature>
<feature type="transmembrane region" description="Helical" evidence="2">
    <location>
        <begin position="81"/>
        <end position="101"/>
    </location>
</feature>
<feature type="topological domain" description="Cytoplasmic" evidence="2">
    <location>
        <begin position="102"/>
        <end position="124"/>
    </location>
</feature>
<feature type="transmembrane region" description="Helical" evidence="2">
    <location>
        <begin position="125"/>
        <end position="145"/>
    </location>
</feature>
<feature type="topological domain" description="Extracellular" evidence="2">
    <location>
        <begin position="146"/>
        <end position="169"/>
    </location>
</feature>
<feature type="transmembrane region" description="Helical" evidence="2">
    <location>
        <begin position="170"/>
        <end position="190"/>
    </location>
</feature>
<feature type="topological domain" description="Cytoplasmic" evidence="2">
    <location>
        <begin position="191"/>
        <end position="199"/>
    </location>
</feature>
<sequence>MESGSVANDSGPLNSTPDVHLYGKTAAMKQRRSNTMLFVFRLLTFSFSLAAVLVMGTNKQKIRSAPQYLEVAWHDFDPFRYVFAVNAIICVYSFVETWLAVYTLSRGTLLLPETFQVWFDYGHDQGFACLLFSANSVGIAMAQLLQSGSTLIQGQYYCSDAGAYCTQARVSIAMGFGAFLFLALSSFLTGLRVARWYLP</sequence>
<proteinExistence type="evidence at transcript level"/>
<evidence type="ECO:0000250" key="1"/>
<evidence type="ECO:0000255" key="2"/>
<evidence type="ECO:0000305" key="3"/>
<gene>
    <name type="ORF">PHYPADRAFT_135270</name>
</gene>
<protein>
    <recommendedName>
        <fullName>CASP-like protein 4C1</fullName>
        <shortName>PpCASPL4C1</shortName>
    </recommendedName>
</protein>
<dbReference type="EMBL" id="DS545007">
    <property type="protein sequence ID" value="EDQ65391.1"/>
    <property type="molecule type" value="Genomic_DNA"/>
</dbReference>
<dbReference type="RefSeq" id="XP_001769829.1">
    <property type="nucleotide sequence ID" value="XM_001769777.1"/>
</dbReference>
<dbReference type="SMR" id="A9STU1"/>
<dbReference type="FunCoup" id="A9STU1">
    <property type="interactions" value="415"/>
</dbReference>
<dbReference type="PaxDb" id="3218-PP1S118_65V6.1"/>
<dbReference type="EnsemblPlants" id="Pp3c12_23720V3.1">
    <property type="protein sequence ID" value="Pp3c12_23720V3.1"/>
    <property type="gene ID" value="Pp3c12_23720"/>
</dbReference>
<dbReference type="EnsemblPlants" id="Pp3c12_23720V3.2">
    <property type="protein sequence ID" value="Pp3c12_23720V3.2"/>
    <property type="gene ID" value="Pp3c12_23720"/>
</dbReference>
<dbReference type="Gramene" id="Pp3c12_23720V3.1">
    <property type="protein sequence ID" value="Pp3c12_23720V3.1"/>
    <property type="gene ID" value="Pp3c12_23720"/>
</dbReference>
<dbReference type="Gramene" id="Pp3c12_23720V3.2">
    <property type="protein sequence ID" value="Pp3c12_23720V3.2"/>
    <property type="gene ID" value="Pp3c12_23720"/>
</dbReference>
<dbReference type="eggNOG" id="ENOG502QQ76">
    <property type="taxonomic scope" value="Eukaryota"/>
</dbReference>
<dbReference type="InParanoid" id="A9STU1"/>
<dbReference type="OrthoDB" id="1907587at2759"/>
<dbReference type="Proteomes" id="UP000006727">
    <property type="component" value="Chromosome 12"/>
</dbReference>
<dbReference type="GO" id="GO:0005886">
    <property type="term" value="C:plasma membrane"/>
    <property type="evidence" value="ECO:0007669"/>
    <property type="project" value="UniProtKB-SubCell"/>
</dbReference>
<dbReference type="InterPro" id="IPR006459">
    <property type="entry name" value="CASP/CASPL"/>
</dbReference>
<dbReference type="InterPro" id="IPR006702">
    <property type="entry name" value="CASP_dom"/>
</dbReference>
<dbReference type="NCBIfam" id="TIGR01569">
    <property type="entry name" value="A_tha_TIGR01569"/>
    <property type="match status" value="1"/>
</dbReference>
<dbReference type="PANTHER" id="PTHR33573">
    <property type="entry name" value="CASP-LIKE PROTEIN 4A4"/>
    <property type="match status" value="1"/>
</dbReference>
<dbReference type="PANTHER" id="PTHR33573:SF56">
    <property type="entry name" value="CASP-LIKE PROTEIN 4C1"/>
    <property type="match status" value="1"/>
</dbReference>
<dbReference type="Pfam" id="PF04535">
    <property type="entry name" value="CASP_dom"/>
    <property type="match status" value="1"/>
</dbReference>
<organism>
    <name type="scientific">Physcomitrium patens</name>
    <name type="common">Spreading-leaved earth moss</name>
    <name type="synonym">Physcomitrella patens</name>
    <dbReference type="NCBI Taxonomy" id="3218"/>
    <lineage>
        <taxon>Eukaryota</taxon>
        <taxon>Viridiplantae</taxon>
        <taxon>Streptophyta</taxon>
        <taxon>Embryophyta</taxon>
        <taxon>Bryophyta</taxon>
        <taxon>Bryophytina</taxon>
        <taxon>Bryopsida</taxon>
        <taxon>Funariidae</taxon>
        <taxon>Funariales</taxon>
        <taxon>Funariaceae</taxon>
        <taxon>Physcomitrium</taxon>
    </lineage>
</organism>
<name>CSPL9_PHYPA</name>
<keyword id="KW-1003">Cell membrane</keyword>
<keyword id="KW-0472">Membrane</keyword>
<keyword id="KW-1185">Reference proteome</keyword>
<keyword id="KW-0812">Transmembrane</keyword>
<keyword id="KW-1133">Transmembrane helix</keyword>